<keyword id="KW-0012">Acyltransferase</keyword>
<keyword id="KW-0963">Cytoplasm</keyword>
<keyword id="KW-1185">Reference proteome</keyword>
<keyword id="KW-0808">Transferase</keyword>
<evidence type="ECO:0000255" key="1">
    <source>
        <dbReference type="HAMAP-Rule" id="MF_00688"/>
    </source>
</evidence>
<organism>
    <name type="scientific">Thermodesulfovibrio yellowstonii (strain ATCC 51303 / DSM 11347 / YP87)</name>
    <dbReference type="NCBI Taxonomy" id="289376"/>
    <lineage>
        <taxon>Bacteria</taxon>
        <taxon>Pseudomonadati</taxon>
        <taxon>Nitrospirota</taxon>
        <taxon>Thermodesulfovibrionia</taxon>
        <taxon>Thermodesulfovibrionales</taxon>
        <taxon>Thermodesulfovibrionaceae</taxon>
        <taxon>Thermodesulfovibrio</taxon>
    </lineage>
</organism>
<comment type="function">
    <text evidence="1">Functions in the N-end rule pathway of protein degradation where it conjugates Leu, Phe and, less efficiently, Met from aminoacyl-tRNAs to the N-termini of proteins containing an N-terminal arginine or lysine.</text>
</comment>
<comment type="catalytic activity">
    <reaction evidence="1">
        <text>N-terminal L-lysyl-[protein] + L-leucyl-tRNA(Leu) = N-terminal L-leucyl-L-lysyl-[protein] + tRNA(Leu) + H(+)</text>
        <dbReference type="Rhea" id="RHEA:12340"/>
        <dbReference type="Rhea" id="RHEA-COMP:9613"/>
        <dbReference type="Rhea" id="RHEA-COMP:9622"/>
        <dbReference type="Rhea" id="RHEA-COMP:12670"/>
        <dbReference type="Rhea" id="RHEA-COMP:12671"/>
        <dbReference type="ChEBI" id="CHEBI:15378"/>
        <dbReference type="ChEBI" id="CHEBI:65249"/>
        <dbReference type="ChEBI" id="CHEBI:78442"/>
        <dbReference type="ChEBI" id="CHEBI:78494"/>
        <dbReference type="ChEBI" id="CHEBI:133043"/>
        <dbReference type="EC" id="2.3.2.6"/>
    </reaction>
</comment>
<comment type="catalytic activity">
    <reaction evidence="1">
        <text>N-terminal L-arginyl-[protein] + L-leucyl-tRNA(Leu) = N-terminal L-leucyl-L-arginyl-[protein] + tRNA(Leu) + H(+)</text>
        <dbReference type="Rhea" id="RHEA:50416"/>
        <dbReference type="Rhea" id="RHEA-COMP:9613"/>
        <dbReference type="Rhea" id="RHEA-COMP:9622"/>
        <dbReference type="Rhea" id="RHEA-COMP:12672"/>
        <dbReference type="Rhea" id="RHEA-COMP:12673"/>
        <dbReference type="ChEBI" id="CHEBI:15378"/>
        <dbReference type="ChEBI" id="CHEBI:64719"/>
        <dbReference type="ChEBI" id="CHEBI:78442"/>
        <dbReference type="ChEBI" id="CHEBI:78494"/>
        <dbReference type="ChEBI" id="CHEBI:133044"/>
        <dbReference type="EC" id="2.3.2.6"/>
    </reaction>
</comment>
<comment type="catalytic activity">
    <reaction evidence="1">
        <text>L-phenylalanyl-tRNA(Phe) + an N-terminal L-alpha-aminoacyl-[protein] = an N-terminal L-phenylalanyl-L-alpha-aminoacyl-[protein] + tRNA(Phe)</text>
        <dbReference type="Rhea" id="RHEA:43632"/>
        <dbReference type="Rhea" id="RHEA-COMP:9668"/>
        <dbReference type="Rhea" id="RHEA-COMP:9699"/>
        <dbReference type="Rhea" id="RHEA-COMP:10636"/>
        <dbReference type="Rhea" id="RHEA-COMP:10637"/>
        <dbReference type="ChEBI" id="CHEBI:78442"/>
        <dbReference type="ChEBI" id="CHEBI:78531"/>
        <dbReference type="ChEBI" id="CHEBI:78597"/>
        <dbReference type="ChEBI" id="CHEBI:83561"/>
        <dbReference type="EC" id="2.3.2.6"/>
    </reaction>
</comment>
<comment type="subcellular location">
    <subcellularLocation>
        <location evidence="1">Cytoplasm</location>
    </subcellularLocation>
</comment>
<comment type="similarity">
    <text evidence="1">Belongs to the L/F-transferase family.</text>
</comment>
<accession>B5YGC5</accession>
<gene>
    <name evidence="1" type="primary">aat</name>
    <name type="ordered locus">THEYE_A1526</name>
</gene>
<feature type="chain" id="PRO_1000131955" description="Leucyl/phenylalanyl-tRNA--protein transferase">
    <location>
        <begin position="1"/>
        <end position="244"/>
    </location>
</feature>
<protein>
    <recommendedName>
        <fullName evidence="1">Leucyl/phenylalanyl-tRNA--protein transferase</fullName>
        <ecNumber evidence="1">2.3.2.6</ecNumber>
    </recommendedName>
    <alternativeName>
        <fullName evidence="1">L/F-transferase</fullName>
    </alternativeName>
    <alternativeName>
        <fullName evidence="1">Leucyltransferase</fullName>
    </alternativeName>
    <alternativeName>
        <fullName evidence="1">Phenyalanyltransferase</fullName>
    </alternativeName>
</protein>
<proteinExistence type="inferred from homology"/>
<reference key="1">
    <citation type="submission" date="2008-08" db="EMBL/GenBank/DDBJ databases">
        <title>The complete genome sequence of Thermodesulfovibrio yellowstonii strain ATCC 51303 / DSM 11347 / YP87.</title>
        <authorList>
            <person name="Dodson R.J."/>
            <person name="Durkin A.S."/>
            <person name="Wu M."/>
            <person name="Eisen J."/>
            <person name="Sutton G."/>
        </authorList>
    </citation>
    <scope>NUCLEOTIDE SEQUENCE [LARGE SCALE GENOMIC DNA]</scope>
    <source>
        <strain>ATCC 51303 / DSM 11347 / YP87</strain>
    </source>
</reference>
<name>LFTR_THEYD</name>
<sequence>MTAYLLHDELIFPHPEYADPDGLLAIGGDLSPDRLILAYKSGIFPWYNHKPILWWSPSKRPLIFPRLFKMSRSLYQTLKKDIYRVSFDKDFVTVIKGCATAPRKDSTGTWITEEMIEAYTLLHKLGFAHSVEVWFNDKIVGGLYGISIGRAFFGESMFTLMKDASKVAISCLVEHLILNNFYFIDCQITNKHLIRLGAYEIPRSVFLILLKEAVQKETLTNKWDRDFEFTSKTAKFLKEKLIPR</sequence>
<dbReference type="EC" id="2.3.2.6" evidence="1"/>
<dbReference type="EMBL" id="CP001147">
    <property type="protein sequence ID" value="ACI21628.1"/>
    <property type="molecule type" value="Genomic_DNA"/>
</dbReference>
<dbReference type="RefSeq" id="WP_012546338.1">
    <property type="nucleotide sequence ID" value="NC_011296.1"/>
</dbReference>
<dbReference type="RefSeq" id="YP_002249323.1">
    <property type="nucleotide sequence ID" value="NC_011296.1"/>
</dbReference>
<dbReference type="SMR" id="B5YGC5"/>
<dbReference type="FunCoup" id="B5YGC5">
    <property type="interactions" value="225"/>
</dbReference>
<dbReference type="STRING" id="289376.THEYE_A1526"/>
<dbReference type="EnsemblBacteria" id="ACI21628">
    <property type="protein sequence ID" value="ACI21628"/>
    <property type="gene ID" value="THEYE_A1526"/>
</dbReference>
<dbReference type="KEGG" id="tye:THEYE_A1526"/>
<dbReference type="PATRIC" id="fig|289376.4.peg.1485"/>
<dbReference type="eggNOG" id="COG2360">
    <property type="taxonomic scope" value="Bacteria"/>
</dbReference>
<dbReference type="HOGENOM" id="CLU_075045_0_0_0"/>
<dbReference type="InParanoid" id="B5YGC5"/>
<dbReference type="OrthoDB" id="9790282at2"/>
<dbReference type="Proteomes" id="UP000000718">
    <property type="component" value="Chromosome"/>
</dbReference>
<dbReference type="GO" id="GO:0005737">
    <property type="term" value="C:cytoplasm"/>
    <property type="evidence" value="ECO:0000318"/>
    <property type="project" value="GO_Central"/>
</dbReference>
<dbReference type="GO" id="GO:0008914">
    <property type="term" value="F:leucyl-tRNA--protein transferase activity"/>
    <property type="evidence" value="ECO:0000318"/>
    <property type="project" value="GO_Central"/>
</dbReference>
<dbReference type="GO" id="GO:0030163">
    <property type="term" value="P:protein catabolic process"/>
    <property type="evidence" value="ECO:0007669"/>
    <property type="project" value="UniProtKB-UniRule"/>
</dbReference>
<dbReference type="FunFam" id="3.30.70.3550:FF:000001">
    <property type="entry name" value="Leucyl/phenylalanyl-tRNA--protein transferase"/>
    <property type="match status" value="1"/>
</dbReference>
<dbReference type="FunFam" id="3.40.630.70:FF:000001">
    <property type="entry name" value="Leucyl/phenylalanyl-tRNA--protein transferase"/>
    <property type="match status" value="1"/>
</dbReference>
<dbReference type="Gene3D" id="3.40.630.70">
    <property type="entry name" value="Leucyl/phenylalanyl-tRNA-protein transferase, C-terminal domain"/>
    <property type="match status" value="1"/>
</dbReference>
<dbReference type="Gene3D" id="3.30.70.3550">
    <property type="entry name" value="Leucyl/phenylalanyl-tRNA-protein transferase, N-terminal domain"/>
    <property type="match status" value="1"/>
</dbReference>
<dbReference type="HAMAP" id="MF_00688">
    <property type="entry name" value="Leu_Phe_trans"/>
    <property type="match status" value="1"/>
</dbReference>
<dbReference type="InterPro" id="IPR016181">
    <property type="entry name" value="Acyl_CoA_acyltransferase"/>
</dbReference>
<dbReference type="InterPro" id="IPR004616">
    <property type="entry name" value="Leu/Phe-tRNA_Trfase"/>
</dbReference>
<dbReference type="InterPro" id="IPR042203">
    <property type="entry name" value="Leu/Phe-tRNA_Trfase_C"/>
</dbReference>
<dbReference type="InterPro" id="IPR042221">
    <property type="entry name" value="Leu/Phe-tRNA_Trfase_N"/>
</dbReference>
<dbReference type="NCBIfam" id="TIGR00667">
    <property type="entry name" value="aat"/>
    <property type="match status" value="1"/>
</dbReference>
<dbReference type="PANTHER" id="PTHR30098">
    <property type="entry name" value="LEUCYL/PHENYLALANYL-TRNA--PROTEIN TRANSFERASE"/>
    <property type="match status" value="1"/>
</dbReference>
<dbReference type="PANTHER" id="PTHR30098:SF2">
    <property type="entry name" value="LEUCYL_PHENYLALANYL-TRNA--PROTEIN TRANSFERASE"/>
    <property type="match status" value="1"/>
</dbReference>
<dbReference type="Pfam" id="PF03588">
    <property type="entry name" value="Leu_Phe_trans"/>
    <property type="match status" value="1"/>
</dbReference>
<dbReference type="SUPFAM" id="SSF55729">
    <property type="entry name" value="Acyl-CoA N-acyltransferases (Nat)"/>
    <property type="match status" value="1"/>
</dbReference>